<accession>P48688</accession>
<accession>B1A943</accession>
<dbReference type="EC" id="4.1.1.39" evidence="1"/>
<dbReference type="EMBL" id="M95671">
    <property type="protein sequence ID" value="AAA84139.1"/>
    <property type="molecule type" value="Genomic_DNA"/>
</dbReference>
<dbReference type="EMBL" id="EU431223">
    <property type="protein sequence ID" value="ABY86790.1"/>
    <property type="molecule type" value="Genomic_DNA"/>
</dbReference>
<dbReference type="RefSeq" id="YP_001671691.1">
    <property type="nucleotide sequence ID" value="NC_010323.1"/>
</dbReference>
<dbReference type="SMR" id="P48688"/>
<dbReference type="GeneID" id="5878390"/>
<dbReference type="KEGG" id="cpap:5878390"/>
<dbReference type="OrthoDB" id="1027897at2759"/>
<dbReference type="GO" id="GO:0009507">
    <property type="term" value="C:chloroplast"/>
    <property type="evidence" value="ECO:0007669"/>
    <property type="project" value="UniProtKB-SubCell"/>
</dbReference>
<dbReference type="GO" id="GO:0000287">
    <property type="term" value="F:magnesium ion binding"/>
    <property type="evidence" value="ECO:0007669"/>
    <property type="project" value="UniProtKB-UniRule"/>
</dbReference>
<dbReference type="GO" id="GO:0004497">
    <property type="term" value="F:monooxygenase activity"/>
    <property type="evidence" value="ECO:0007669"/>
    <property type="project" value="UniProtKB-KW"/>
</dbReference>
<dbReference type="GO" id="GO:0016984">
    <property type="term" value="F:ribulose-bisphosphate carboxylase activity"/>
    <property type="evidence" value="ECO:0007669"/>
    <property type="project" value="UniProtKB-UniRule"/>
</dbReference>
<dbReference type="GO" id="GO:0009853">
    <property type="term" value="P:photorespiration"/>
    <property type="evidence" value="ECO:0007669"/>
    <property type="project" value="UniProtKB-KW"/>
</dbReference>
<dbReference type="GO" id="GO:0019253">
    <property type="term" value="P:reductive pentose-phosphate cycle"/>
    <property type="evidence" value="ECO:0007669"/>
    <property type="project" value="UniProtKB-UniRule"/>
</dbReference>
<dbReference type="CDD" id="cd08212">
    <property type="entry name" value="RuBisCO_large_I"/>
    <property type="match status" value="1"/>
</dbReference>
<dbReference type="FunFam" id="3.20.20.110:FF:000001">
    <property type="entry name" value="Ribulose bisphosphate carboxylase large chain"/>
    <property type="match status" value="1"/>
</dbReference>
<dbReference type="FunFam" id="3.30.70.150:FF:000001">
    <property type="entry name" value="Ribulose bisphosphate carboxylase large chain"/>
    <property type="match status" value="1"/>
</dbReference>
<dbReference type="Gene3D" id="3.20.20.110">
    <property type="entry name" value="Ribulose bisphosphate carboxylase, large subunit, C-terminal domain"/>
    <property type="match status" value="1"/>
</dbReference>
<dbReference type="Gene3D" id="3.30.70.150">
    <property type="entry name" value="RuBisCO large subunit, N-terminal domain"/>
    <property type="match status" value="1"/>
</dbReference>
<dbReference type="HAMAP" id="MF_01338">
    <property type="entry name" value="RuBisCO_L_type1"/>
    <property type="match status" value="1"/>
</dbReference>
<dbReference type="InterPro" id="IPR033966">
    <property type="entry name" value="RuBisCO"/>
</dbReference>
<dbReference type="InterPro" id="IPR020878">
    <property type="entry name" value="RuBisCo_large_chain_AS"/>
</dbReference>
<dbReference type="InterPro" id="IPR000685">
    <property type="entry name" value="RuBisCO_lsu_C"/>
</dbReference>
<dbReference type="InterPro" id="IPR036376">
    <property type="entry name" value="RuBisCO_lsu_C_sf"/>
</dbReference>
<dbReference type="InterPro" id="IPR017443">
    <property type="entry name" value="RuBisCO_lsu_fd_N"/>
</dbReference>
<dbReference type="InterPro" id="IPR036422">
    <property type="entry name" value="RuBisCO_lsu_N_sf"/>
</dbReference>
<dbReference type="InterPro" id="IPR020888">
    <property type="entry name" value="RuBisCO_lsuI"/>
</dbReference>
<dbReference type="NCBIfam" id="NF003252">
    <property type="entry name" value="PRK04208.1"/>
    <property type="match status" value="1"/>
</dbReference>
<dbReference type="PANTHER" id="PTHR42704">
    <property type="entry name" value="RIBULOSE BISPHOSPHATE CARBOXYLASE"/>
    <property type="match status" value="1"/>
</dbReference>
<dbReference type="PANTHER" id="PTHR42704:SF15">
    <property type="entry name" value="RIBULOSE BISPHOSPHATE CARBOXYLASE LARGE CHAIN"/>
    <property type="match status" value="1"/>
</dbReference>
<dbReference type="Pfam" id="PF00016">
    <property type="entry name" value="RuBisCO_large"/>
    <property type="match status" value="1"/>
</dbReference>
<dbReference type="Pfam" id="PF02788">
    <property type="entry name" value="RuBisCO_large_N"/>
    <property type="match status" value="1"/>
</dbReference>
<dbReference type="SFLD" id="SFLDG01052">
    <property type="entry name" value="RuBisCO"/>
    <property type="match status" value="1"/>
</dbReference>
<dbReference type="SFLD" id="SFLDS00014">
    <property type="entry name" value="RuBisCO"/>
    <property type="match status" value="1"/>
</dbReference>
<dbReference type="SFLD" id="SFLDG00301">
    <property type="entry name" value="RuBisCO-like_proteins"/>
    <property type="match status" value="1"/>
</dbReference>
<dbReference type="SUPFAM" id="SSF51649">
    <property type="entry name" value="RuBisCo, C-terminal domain"/>
    <property type="match status" value="1"/>
</dbReference>
<dbReference type="SUPFAM" id="SSF54966">
    <property type="entry name" value="RuBisCO, large subunit, small (N-terminal) domain"/>
    <property type="match status" value="1"/>
</dbReference>
<dbReference type="PROSITE" id="PS00157">
    <property type="entry name" value="RUBISCO_LARGE"/>
    <property type="match status" value="1"/>
</dbReference>
<geneLocation type="chloroplast"/>
<organism>
    <name type="scientific">Carica papaya</name>
    <name type="common">Papaya</name>
    <dbReference type="NCBI Taxonomy" id="3649"/>
    <lineage>
        <taxon>Eukaryota</taxon>
        <taxon>Viridiplantae</taxon>
        <taxon>Streptophyta</taxon>
        <taxon>Embryophyta</taxon>
        <taxon>Tracheophyta</taxon>
        <taxon>Spermatophyta</taxon>
        <taxon>Magnoliopsida</taxon>
        <taxon>eudicotyledons</taxon>
        <taxon>Gunneridae</taxon>
        <taxon>Pentapetalae</taxon>
        <taxon>rosids</taxon>
        <taxon>malvids</taxon>
        <taxon>Brassicales</taxon>
        <taxon>Caricaceae</taxon>
        <taxon>Carica</taxon>
    </lineage>
</organism>
<reference key="1">
    <citation type="journal article" date="1993" name="Ann. Mo. Bot. Gard.">
        <title>Nucleotide sequences of the rbcL gene indicate monophyly of mustard oil plants.</title>
        <authorList>
            <person name="Rodman J.E."/>
            <person name="Price R.A."/>
            <person name="Karol K.G."/>
            <person name="Conti E."/>
            <person name="Sytsma K."/>
            <person name="Palmer J."/>
        </authorList>
        <dbReference type="AGRICOLA" id="IND93053815"/>
    </citation>
    <scope>NUCLEOTIDE SEQUENCE [GENOMIC DNA]</scope>
    <source>
        <tissue>Leaf</tissue>
    </source>
</reference>
<reference key="2">
    <citation type="journal article" date="2008" name="Nature">
        <title>The draft genome of the transgenic tropical fruit tree papaya (Carica papaya Linnaeus).</title>
        <authorList>
            <person name="Ming R."/>
            <person name="Hou S."/>
            <person name="Feng Y."/>
            <person name="Yu Q."/>
            <person name="Dionne-Laporte A."/>
            <person name="Saw J.H."/>
            <person name="Senin P."/>
            <person name="Wang W."/>
            <person name="Ly B.V."/>
            <person name="Lewis K.L."/>
            <person name="Salzberg S.L."/>
            <person name="Feng L."/>
            <person name="Jones M.R."/>
            <person name="Skelton R.L."/>
            <person name="Murray J.E."/>
            <person name="Chen C."/>
            <person name="Qian W."/>
            <person name="Shen J."/>
            <person name="Du P."/>
            <person name="Eustice M."/>
            <person name="Tong E."/>
            <person name="Tang H."/>
            <person name="Lyons E."/>
            <person name="Paull R.E."/>
            <person name="Michael T.P."/>
            <person name="Wall K."/>
            <person name="Rice D.W."/>
            <person name="Albert H."/>
            <person name="Wang M.L."/>
            <person name="Zhu Y.J."/>
            <person name="Schatz M."/>
            <person name="Nagarajan N."/>
            <person name="Acob R.A."/>
            <person name="Guan P."/>
            <person name="Blas A."/>
            <person name="Wai C.M."/>
            <person name="Ackerman C.M."/>
            <person name="Ren Y."/>
            <person name="Liu C."/>
            <person name="Wang J."/>
            <person name="Wang J."/>
            <person name="Na J.K."/>
            <person name="Shakirov E.V."/>
            <person name="Haas B."/>
            <person name="Thimmapuram J."/>
            <person name="Nelson D."/>
            <person name="Wang X."/>
            <person name="Bowers J.E."/>
            <person name="Gschwend A.R."/>
            <person name="Delcher A.L."/>
            <person name="Singh R."/>
            <person name="Suzuki J.Y."/>
            <person name="Tripathi S."/>
            <person name="Neupane K."/>
            <person name="Wei H."/>
            <person name="Irikura B."/>
            <person name="Paidi M."/>
            <person name="Jiang N."/>
            <person name="Zhang W."/>
            <person name="Presting G."/>
            <person name="Windsor A."/>
            <person name="Navajas-Perez R."/>
            <person name="Torres M.J."/>
            <person name="Feltus F.A."/>
            <person name="Porter B."/>
            <person name="Li Y."/>
            <person name="Burroughs A.M."/>
            <person name="Luo M.C."/>
            <person name="Liu L."/>
            <person name="Christopher D.A."/>
            <person name="Mount S.M."/>
            <person name="Moore P.H."/>
            <person name="Sugimura T."/>
            <person name="Jiang J."/>
            <person name="Schuler M.A."/>
            <person name="Friedman V."/>
            <person name="Mitchell-Olds T."/>
            <person name="Shippen D.E."/>
            <person name="dePamphilis C.W."/>
            <person name="Palmer J.D."/>
            <person name="Freeling M."/>
            <person name="Paterson A.H."/>
            <person name="Gonsalves D."/>
            <person name="Wang L."/>
            <person name="Alam M."/>
        </authorList>
    </citation>
    <scope>NUCLEOTIDE SEQUENCE [LARGE SCALE GENOMIC DNA]</scope>
    <source>
        <strain>cv. SunUp</strain>
    </source>
</reference>
<feature type="propeptide" id="PRO_0000031159" evidence="1">
    <location>
        <begin position="1"/>
        <end position="2"/>
    </location>
</feature>
<feature type="chain" id="PRO_0000031160" description="Ribulose bisphosphate carboxylase large chain">
    <location>
        <begin position="3"/>
        <end position="475"/>
    </location>
</feature>
<feature type="active site" description="Proton acceptor" evidence="1">
    <location>
        <position position="175"/>
    </location>
</feature>
<feature type="active site" description="Proton acceptor" evidence="1">
    <location>
        <position position="294"/>
    </location>
</feature>
<feature type="binding site" description="in homodimeric partner" evidence="1">
    <location>
        <position position="123"/>
    </location>
    <ligand>
        <name>substrate</name>
    </ligand>
</feature>
<feature type="binding site" evidence="1">
    <location>
        <position position="173"/>
    </location>
    <ligand>
        <name>substrate</name>
    </ligand>
</feature>
<feature type="binding site" evidence="1">
    <location>
        <position position="177"/>
    </location>
    <ligand>
        <name>substrate</name>
    </ligand>
</feature>
<feature type="binding site" description="via carbamate group" evidence="1">
    <location>
        <position position="201"/>
    </location>
    <ligand>
        <name>Mg(2+)</name>
        <dbReference type="ChEBI" id="CHEBI:18420"/>
    </ligand>
</feature>
<feature type="binding site" evidence="1">
    <location>
        <position position="203"/>
    </location>
    <ligand>
        <name>Mg(2+)</name>
        <dbReference type="ChEBI" id="CHEBI:18420"/>
    </ligand>
</feature>
<feature type="binding site" evidence="1">
    <location>
        <position position="204"/>
    </location>
    <ligand>
        <name>Mg(2+)</name>
        <dbReference type="ChEBI" id="CHEBI:18420"/>
    </ligand>
</feature>
<feature type="binding site" evidence="1">
    <location>
        <position position="295"/>
    </location>
    <ligand>
        <name>substrate</name>
    </ligand>
</feature>
<feature type="binding site" evidence="1">
    <location>
        <position position="327"/>
    </location>
    <ligand>
        <name>substrate</name>
    </ligand>
</feature>
<feature type="binding site" evidence="1">
    <location>
        <position position="379"/>
    </location>
    <ligand>
        <name>substrate</name>
    </ligand>
</feature>
<feature type="site" description="Transition state stabilizer" evidence="1">
    <location>
        <position position="334"/>
    </location>
</feature>
<feature type="modified residue" description="N-acetylproline" evidence="1">
    <location>
        <position position="3"/>
    </location>
</feature>
<feature type="modified residue" description="N6,N6,N6-trimethyllysine" evidence="1">
    <location>
        <position position="14"/>
    </location>
</feature>
<feature type="modified residue" description="N6-carboxylysine" evidence="1">
    <location>
        <position position="201"/>
    </location>
</feature>
<feature type="disulfide bond" description="Interchain; in linked form" evidence="1">
    <location>
        <position position="247"/>
    </location>
</feature>
<feature type="sequence conflict" description="In Ref. 1; AAA84139." evidence="2" ref="1">
    <original>A</original>
    <variation>R</variation>
    <location>
        <position position="58"/>
    </location>
</feature>
<keyword id="KW-0007">Acetylation</keyword>
<keyword id="KW-0113">Calvin cycle</keyword>
<keyword id="KW-0120">Carbon dioxide fixation</keyword>
<keyword id="KW-0150">Chloroplast</keyword>
<keyword id="KW-1015">Disulfide bond</keyword>
<keyword id="KW-0456">Lyase</keyword>
<keyword id="KW-0460">Magnesium</keyword>
<keyword id="KW-0479">Metal-binding</keyword>
<keyword id="KW-0488">Methylation</keyword>
<keyword id="KW-0503">Monooxygenase</keyword>
<keyword id="KW-0560">Oxidoreductase</keyword>
<keyword id="KW-0601">Photorespiration</keyword>
<keyword id="KW-0602">Photosynthesis</keyword>
<keyword id="KW-0934">Plastid</keyword>
<gene>
    <name evidence="1" type="primary">rbcL</name>
</gene>
<evidence type="ECO:0000255" key="1">
    <source>
        <dbReference type="HAMAP-Rule" id="MF_01338"/>
    </source>
</evidence>
<evidence type="ECO:0000305" key="2"/>
<protein>
    <recommendedName>
        <fullName evidence="1">Ribulose bisphosphate carboxylase large chain</fullName>
        <shortName evidence="1">RuBisCO large subunit</shortName>
        <ecNumber evidence="1">4.1.1.39</ecNumber>
    </recommendedName>
</protein>
<sequence length="475" mass="52490">MSPQTETKASVGFKAGVKDYKLTYYTPDYQTKDTDILAAFRVTPQPGVPPEEAGAAVAAESSTGTWTTVWTDGLTSLDRYKGRCYGIEPVPGEESQFIAYVAYPLDLFEEGSVTNMFTSIVGNVFGFKALRALRLEDLRIPPAYIKTFQGPPHGIQVERDKLNKYGRPLLGCTIKPKLGLSAKNYGRAVYECLRGGLDFTKDDENVNSQPFMRWRDRFLFCAEAIYKAQAETGEIKGHYLNATAGTCEEMIKRAVFARELGAPIIMHDYLTGGFTANTSLAHYCRDNGLLLHIHRAMHAVIDRQKNHGMHFRVLAKALRLSGGDHIHAGTVVGKLEGERDITLGFVDLLRDEFVEKDRSRGIFFTQDWVSLPGVLPVASGGIHVWHMPALTEIFGDDSVLQFGGGTLGHPWGNAPGAVANRVALEACVQARNEGRDLAREGNEIIREASKWSPELAAACEVWKEIKFEFPAVDTI</sequence>
<name>RBL_CARPA</name>
<proteinExistence type="inferred from homology"/>
<comment type="function">
    <text evidence="1">RuBisCO catalyzes two reactions: the carboxylation of D-ribulose 1,5-bisphosphate, the primary event in carbon dioxide fixation, as well as the oxidative fragmentation of the pentose substrate in the photorespiration process. Both reactions occur simultaneously and in competition at the same active site.</text>
</comment>
<comment type="catalytic activity">
    <reaction evidence="1">
        <text>2 (2R)-3-phosphoglycerate + 2 H(+) = D-ribulose 1,5-bisphosphate + CO2 + H2O</text>
        <dbReference type="Rhea" id="RHEA:23124"/>
        <dbReference type="ChEBI" id="CHEBI:15377"/>
        <dbReference type="ChEBI" id="CHEBI:15378"/>
        <dbReference type="ChEBI" id="CHEBI:16526"/>
        <dbReference type="ChEBI" id="CHEBI:57870"/>
        <dbReference type="ChEBI" id="CHEBI:58272"/>
        <dbReference type="EC" id="4.1.1.39"/>
    </reaction>
</comment>
<comment type="catalytic activity">
    <reaction evidence="1">
        <text>D-ribulose 1,5-bisphosphate + O2 = 2-phosphoglycolate + (2R)-3-phosphoglycerate + 2 H(+)</text>
        <dbReference type="Rhea" id="RHEA:36631"/>
        <dbReference type="ChEBI" id="CHEBI:15378"/>
        <dbReference type="ChEBI" id="CHEBI:15379"/>
        <dbReference type="ChEBI" id="CHEBI:57870"/>
        <dbReference type="ChEBI" id="CHEBI:58033"/>
        <dbReference type="ChEBI" id="CHEBI:58272"/>
    </reaction>
</comment>
<comment type="cofactor">
    <cofactor evidence="1">
        <name>Mg(2+)</name>
        <dbReference type="ChEBI" id="CHEBI:18420"/>
    </cofactor>
    <text evidence="1">Binds 1 Mg(2+) ion per subunit.</text>
</comment>
<comment type="subunit">
    <text evidence="1">Heterohexadecamer of 8 large chains and 8 small chains; disulfide-linked. The disulfide link is formed within the large subunit homodimers.</text>
</comment>
<comment type="subcellular location">
    <subcellularLocation>
        <location>Plastid</location>
        <location>Chloroplast</location>
    </subcellularLocation>
</comment>
<comment type="PTM">
    <text evidence="1">The disulfide bond which can form in the large chain dimeric partners within the hexadecamer appears to be associated with oxidative stress and protein turnover.</text>
</comment>
<comment type="miscellaneous">
    <text evidence="1">The basic functional RuBisCO is composed of a large chain homodimer in a 'head-to-tail' conformation. In form I RuBisCO this homodimer is arranged in a barrel-like tetramer with the small subunits forming a tetrameric 'cap' on each end of the 'barrel'.</text>
</comment>
<comment type="similarity">
    <text evidence="1">Belongs to the RuBisCO large chain family. Type I subfamily.</text>
</comment>